<proteinExistence type="inferred from homology"/>
<evidence type="ECO:0000250" key="1"/>
<evidence type="ECO:0000305" key="2"/>
<sequence length="361" mass="39492">MAQPVQSIDVLLIEHAELELALADPELHSNPAEARKAGRRFARLAPIVATHRKLISARDDLQTARELAAGDESFADEIAELESRIAELTTQLTDMLAPHDPHGPDDIVLEVKSGEGGEESALFAADLARMYIRYAERHGWTVTVLDETTSDLGGYKDATLAISHKGASDGDAVDGVWSRMKFEGGVHRVQRVPVTESQGRVHTSAAGVLVYPEPEEIGEVHIDESDLRIDVYRSSGKGGQGVNTTDSAVRITHLPTGVVVTCQNERSQLQNKTRALQVLAARLQAMAEEQALANASADRASQIRTVDRSERIRTYNFPENRITDHRIGYKAHNLDQVLDGDLDALFDALSAADKQSRLQQV</sequence>
<feature type="chain" id="PRO_0000177704" description="Peptide chain release factor 1">
    <location>
        <begin position="1"/>
        <end position="361"/>
    </location>
</feature>
<feature type="modified residue" description="N5-methylglutamine" evidence="1">
    <location>
        <position position="240"/>
    </location>
</feature>
<organism>
    <name type="scientific">Mycobacterium leprae (strain TN)</name>
    <dbReference type="NCBI Taxonomy" id="272631"/>
    <lineage>
        <taxon>Bacteria</taxon>
        <taxon>Bacillati</taxon>
        <taxon>Actinomycetota</taxon>
        <taxon>Actinomycetes</taxon>
        <taxon>Mycobacteriales</taxon>
        <taxon>Mycobacteriaceae</taxon>
        <taxon>Mycobacterium</taxon>
    </lineage>
</organism>
<dbReference type="EMBL" id="U15186">
    <property type="protein sequence ID" value="AAA63095.1"/>
    <property type="status" value="ALT_INIT"/>
    <property type="molecule type" value="Genomic_DNA"/>
</dbReference>
<dbReference type="EMBL" id="AL583920">
    <property type="protein sequence ID" value="CAC31515.1"/>
    <property type="molecule type" value="Genomic_DNA"/>
</dbReference>
<dbReference type="PIR" id="H87050">
    <property type="entry name" value="H87050"/>
</dbReference>
<dbReference type="PIR" id="T09986">
    <property type="entry name" value="T09986"/>
</dbReference>
<dbReference type="RefSeq" id="NP_301828.1">
    <property type="nucleotide sequence ID" value="NC_002677.1"/>
</dbReference>
<dbReference type="RefSeq" id="WP_010908152.1">
    <property type="nucleotide sequence ID" value="NC_002677.1"/>
</dbReference>
<dbReference type="SMR" id="P45833"/>
<dbReference type="STRING" id="272631.gene:17574961"/>
<dbReference type="KEGG" id="mle:ML1134"/>
<dbReference type="PATRIC" id="fig|272631.5.peg.2056"/>
<dbReference type="Leproma" id="ML1134"/>
<dbReference type="eggNOG" id="COG0216">
    <property type="taxonomic scope" value="Bacteria"/>
</dbReference>
<dbReference type="HOGENOM" id="CLU_036856_0_1_11"/>
<dbReference type="OrthoDB" id="9806673at2"/>
<dbReference type="Proteomes" id="UP000000806">
    <property type="component" value="Chromosome"/>
</dbReference>
<dbReference type="GO" id="GO:0005737">
    <property type="term" value="C:cytoplasm"/>
    <property type="evidence" value="ECO:0007669"/>
    <property type="project" value="UniProtKB-SubCell"/>
</dbReference>
<dbReference type="GO" id="GO:0016149">
    <property type="term" value="F:translation release factor activity, codon specific"/>
    <property type="evidence" value="ECO:0007669"/>
    <property type="project" value="UniProtKB-UniRule"/>
</dbReference>
<dbReference type="FunFam" id="3.30.160.20:FF:000004">
    <property type="entry name" value="Peptide chain release factor 1"/>
    <property type="match status" value="1"/>
</dbReference>
<dbReference type="Gene3D" id="3.30.160.20">
    <property type="match status" value="1"/>
</dbReference>
<dbReference type="Gene3D" id="3.30.70.1660">
    <property type="match status" value="1"/>
</dbReference>
<dbReference type="Gene3D" id="6.10.140.1950">
    <property type="match status" value="1"/>
</dbReference>
<dbReference type="HAMAP" id="MF_00093">
    <property type="entry name" value="Rel_fac_1"/>
    <property type="match status" value="1"/>
</dbReference>
<dbReference type="InterPro" id="IPR005139">
    <property type="entry name" value="PCRF"/>
</dbReference>
<dbReference type="InterPro" id="IPR000352">
    <property type="entry name" value="Pep_chain_release_fac_I"/>
</dbReference>
<dbReference type="InterPro" id="IPR045853">
    <property type="entry name" value="Pep_chain_release_fac_I_sf"/>
</dbReference>
<dbReference type="InterPro" id="IPR050057">
    <property type="entry name" value="Prokaryotic/Mito_RF"/>
</dbReference>
<dbReference type="InterPro" id="IPR004373">
    <property type="entry name" value="RF-1"/>
</dbReference>
<dbReference type="NCBIfam" id="TIGR00019">
    <property type="entry name" value="prfA"/>
    <property type="match status" value="1"/>
</dbReference>
<dbReference type="NCBIfam" id="NF001859">
    <property type="entry name" value="PRK00591.1"/>
    <property type="match status" value="1"/>
</dbReference>
<dbReference type="PANTHER" id="PTHR43804">
    <property type="entry name" value="LD18447P"/>
    <property type="match status" value="1"/>
</dbReference>
<dbReference type="PANTHER" id="PTHR43804:SF7">
    <property type="entry name" value="LD18447P"/>
    <property type="match status" value="1"/>
</dbReference>
<dbReference type="Pfam" id="PF03462">
    <property type="entry name" value="PCRF"/>
    <property type="match status" value="1"/>
</dbReference>
<dbReference type="Pfam" id="PF00472">
    <property type="entry name" value="RF-1"/>
    <property type="match status" value="1"/>
</dbReference>
<dbReference type="SMART" id="SM00937">
    <property type="entry name" value="PCRF"/>
    <property type="match status" value="1"/>
</dbReference>
<dbReference type="SUPFAM" id="SSF75620">
    <property type="entry name" value="Release factor"/>
    <property type="match status" value="1"/>
</dbReference>
<dbReference type="PROSITE" id="PS00745">
    <property type="entry name" value="RF_PROK_I"/>
    <property type="match status" value="1"/>
</dbReference>
<gene>
    <name type="primary">prfA</name>
    <name type="ordered locus">ML1134</name>
</gene>
<name>RF1_MYCLE</name>
<reference key="1">
    <citation type="submission" date="1994-09" db="EMBL/GenBank/DDBJ databases">
        <authorList>
            <person name="Smith D.R."/>
            <person name="Robison K."/>
        </authorList>
    </citation>
    <scope>NUCLEOTIDE SEQUENCE [GENOMIC DNA]</scope>
</reference>
<reference key="2">
    <citation type="journal article" date="2001" name="Nature">
        <title>Massive gene decay in the leprosy bacillus.</title>
        <authorList>
            <person name="Cole S.T."/>
            <person name="Eiglmeier K."/>
            <person name="Parkhill J."/>
            <person name="James K.D."/>
            <person name="Thomson N.R."/>
            <person name="Wheeler P.R."/>
            <person name="Honore N."/>
            <person name="Garnier T."/>
            <person name="Churcher C.M."/>
            <person name="Harris D.E."/>
            <person name="Mungall K.L."/>
            <person name="Basham D."/>
            <person name="Brown D."/>
            <person name="Chillingworth T."/>
            <person name="Connor R."/>
            <person name="Davies R.M."/>
            <person name="Devlin K."/>
            <person name="Duthoy S."/>
            <person name="Feltwell T."/>
            <person name="Fraser A."/>
            <person name="Hamlin N."/>
            <person name="Holroyd S."/>
            <person name="Hornsby T."/>
            <person name="Jagels K."/>
            <person name="Lacroix C."/>
            <person name="Maclean J."/>
            <person name="Moule S."/>
            <person name="Murphy L.D."/>
            <person name="Oliver K."/>
            <person name="Quail M.A."/>
            <person name="Rajandream M.A."/>
            <person name="Rutherford K.M."/>
            <person name="Rutter S."/>
            <person name="Seeger K."/>
            <person name="Simon S."/>
            <person name="Simmonds M."/>
            <person name="Skelton J."/>
            <person name="Squares R."/>
            <person name="Squares S."/>
            <person name="Stevens K."/>
            <person name="Taylor K."/>
            <person name="Whitehead S."/>
            <person name="Woodward J.R."/>
            <person name="Barrell B.G."/>
        </authorList>
    </citation>
    <scope>NUCLEOTIDE SEQUENCE [LARGE SCALE GENOMIC DNA]</scope>
    <source>
        <strain>TN</strain>
    </source>
</reference>
<keyword id="KW-0963">Cytoplasm</keyword>
<keyword id="KW-0488">Methylation</keyword>
<keyword id="KW-0648">Protein biosynthesis</keyword>
<keyword id="KW-1185">Reference proteome</keyword>
<comment type="function">
    <text evidence="1">Peptide chain release factor 1 directs the termination of translation in response to the peptide chain termination codons UAG and UAA.</text>
</comment>
<comment type="subcellular location">
    <subcellularLocation>
        <location evidence="1">Cytoplasm</location>
    </subcellularLocation>
</comment>
<comment type="PTM">
    <text evidence="1">Methylated by PrmC. Methylation increases the termination efficiency of RF1 (By similarity).</text>
</comment>
<comment type="similarity">
    <text evidence="2">Belongs to the prokaryotic/mitochondrial release factor family.</text>
</comment>
<comment type="sequence caution" evidence="2">
    <conflict type="erroneous initiation">
        <sequence resource="EMBL-CDS" id="AAA63095"/>
    </conflict>
</comment>
<accession>P45833</accession>
<protein>
    <recommendedName>
        <fullName>Peptide chain release factor 1</fullName>
        <shortName>RF-1</shortName>
    </recommendedName>
</protein>